<proteinExistence type="evidence at protein level"/>
<keyword id="KW-0025">Alternative splicing</keyword>
<keyword id="KW-0175">Coiled coil</keyword>
<keyword id="KW-0903">Direct protein sequencing</keyword>
<keyword id="KW-1185">Reference proteome</keyword>
<keyword id="KW-0677">Repeat</keyword>
<dbReference type="EMBL" id="DQ443311">
    <property type="protein sequence ID" value="ABF51400.1"/>
    <property type="molecule type" value="mRNA"/>
</dbReference>
<dbReference type="EMBL" id="DQ443352">
    <property type="protein sequence ID" value="ABF51441.1"/>
    <property type="molecule type" value="mRNA"/>
</dbReference>
<dbReference type="EMBL" id="DQ443353">
    <property type="protein sequence ID" value="ABF51442.1"/>
    <property type="molecule type" value="mRNA"/>
</dbReference>
<dbReference type="RefSeq" id="NP_001040465.1">
    <molecule id="Q1HPQ0-2"/>
    <property type="nucleotide sequence ID" value="NM_001047000.1"/>
</dbReference>
<dbReference type="RefSeq" id="NP_001103782.1">
    <molecule id="Q1HPQ0-1"/>
    <property type="nucleotide sequence ID" value="NM_001110312.3"/>
</dbReference>
<dbReference type="RefSeq" id="XP_062530473.1">
    <molecule id="Q1HPQ0-1"/>
    <property type="nucleotide sequence ID" value="XM_062674489.1"/>
</dbReference>
<dbReference type="SMR" id="Q1HPQ0"/>
<dbReference type="FunCoup" id="Q1HPQ0">
    <property type="interactions" value="24"/>
</dbReference>
<dbReference type="STRING" id="7091.Q1HPQ0"/>
<dbReference type="Allergome" id="4112">
    <property type="allergen name" value="Bomb m 7"/>
</dbReference>
<dbReference type="Allergome" id="4113">
    <property type="allergen name" value="Bomb m 7.0101"/>
</dbReference>
<dbReference type="Allergome" id="4143">
    <property type="allergen name" value="Bomb m 7.0103"/>
</dbReference>
<dbReference type="PaxDb" id="7091-BGIBMGA001582-TA"/>
<dbReference type="EnsemblMetazoa" id="NM_001047000.1">
    <molecule id="Q1HPQ0-2"/>
    <property type="protein sequence ID" value="NP_001040465.1"/>
    <property type="gene ID" value="LOC100101174"/>
</dbReference>
<dbReference type="EnsemblMetazoa" id="NM_001110312.3">
    <molecule id="Q1HPQ0-1"/>
    <property type="protein sequence ID" value="NP_001103782.1"/>
    <property type="gene ID" value="LOC100101174"/>
</dbReference>
<dbReference type="GeneID" id="100101174"/>
<dbReference type="KEGG" id="bmor:100101174"/>
<dbReference type="eggNOG" id="KOG1003">
    <property type="taxonomic scope" value="Eukaryota"/>
</dbReference>
<dbReference type="InParanoid" id="Q1HPQ0"/>
<dbReference type="Proteomes" id="UP000005204">
    <property type="component" value="Unassembled WGS sequence"/>
</dbReference>
<dbReference type="FunFam" id="1.20.5.170:FF:000005">
    <property type="entry name" value="Tropomyosin alpha-1 chain"/>
    <property type="match status" value="1"/>
</dbReference>
<dbReference type="FunFam" id="1.20.5.170:FF:000001">
    <property type="entry name" value="Tropomyosin alpha-1 chain isoform 1"/>
    <property type="match status" value="1"/>
</dbReference>
<dbReference type="FunFam" id="1.20.5.340:FF:000001">
    <property type="entry name" value="Tropomyosin alpha-1 chain isoform 2"/>
    <property type="match status" value="1"/>
</dbReference>
<dbReference type="Gene3D" id="1.20.5.170">
    <property type="match status" value="2"/>
</dbReference>
<dbReference type="Gene3D" id="1.20.5.340">
    <property type="match status" value="1"/>
</dbReference>
<dbReference type="InterPro" id="IPR000533">
    <property type="entry name" value="Tropomyosin"/>
</dbReference>
<dbReference type="PANTHER" id="PTHR19269">
    <property type="entry name" value="TROPOMYOSIN"/>
    <property type="match status" value="1"/>
</dbReference>
<dbReference type="Pfam" id="PF00261">
    <property type="entry name" value="Tropomyosin"/>
    <property type="match status" value="1"/>
</dbReference>
<dbReference type="PRINTS" id="PR00194">
    <property type="entry name" value="TROPOMYOSIN"/>
</dbReference>
<dbReference type="SUPFAM" id="SSF57997">
    <property type="entry name" value="Tropomyosin"/>
    <property type="match status" value="1"/>
</dbReference>
<dbReference type="PROSITE" id="PS00326">
    <property type="entry name" value="TROPOMYOSIN"/>
    <property type="match status" value="1"/>
</dbReference>
<sequence>MDAIKKKMQAMKLEKDNALDRAAMCEQQAKDANLRAEKAEEEARQLQKKIQTIENELDQTQESLMQVNGKLEEKEKALQNAESEVAALNRRIQLLEEDLERSEERLATATAKLSEASQAADESERARKVLENRSLADEERMDALENQLKEARFLAEEADKKYDEVARKLAMVEADLERAEERAESGESKIVELEEELRVVGNNLKSLEVSEEKANQREEEYKNQIKTLTTRLKEAEARAEFAERSVQKLQKEVDRLEDELVAEKEKYKDIGDDLDTAFVELILKE</sequence>
<name>TPM2_BOMMO</name>
<evidence type="ECO:0000250" key="1">
    <source>
        <dbReference type="UniProtKB" id="P15846"/>
    </source>
</evidence>
<evidence type="ECO:0000255" key="2"/>
<evidence type="ECO:0000256" key="3">
    <source>
        <dbReference type="SAM" id="MobiDB-lite"/>
    </source>
</evidence>
<evidence type="ECO:0000269" key="4">
    <source>
    </source>
</evidence>
<evidence type="ECO:0000269" key="5">
    <source ref="1"/>
</evidence>
<evidence type="ECO:0000303" key="6">
    <source ref="1"/>
</evidence>
<evidence type="ECO:0000305" key="7"/>
<evidence type="ECO:0000312" key="8">
    <source>
        <dbReference type="EMBL" id="ABF51441.1"/>
    </source>
</evidence>
<organism>
    <name type="scientific">Bombyx mori</name>
    <name type="common">Silk moth</name>
    <dbReference type="NCBI Taxonomy" id="7091"/>
    <lineage>
        <taxon>Eukaryota</taxon>
        <taxon>Metazoa</taxon>
        <taxon>Ecdysozoa</taxon>
        <taxon>Arthropoda</taxon>
        <taxon>Hexapoda</taxon>
        <taxon>Insecta</taxon>
        <taxon>Pterygota</taxon>
        <taxon>Neoptera</taxon>
        <taxon>Endopterygota</taxon>
        <taxon>Lepidoptera</taxon>
        <taxon>Glossata</taxon>
        <taxon>Ditrysia</taxon>
        <taxon>Bombycoidea</taxon>
        <taxon>Bombycidae</taxon>
        <taxon>Bombycinae</taxon>
        <taxon>Bombyx</taxon>
    </lineage>
</organism>
<feature type="chain" id="PRO_0000274258" description="Tropomyosin-2">
    <location>
        <begin position="1"/>
        <end position="285"/>
    </location>
</feature>
<feature type="region of interest" description="Disordered" evidence="3">
    <location>
        <begin position="103"/>
        <end position="133"/>
    </location>
</feature>
<feature type="coiled-coil region" evidence="2">
    <location>
        <begin position="1"/>
        <end position="277"/>
    </location>
</feature>
<feature type="compositionally biased region" description="Basic and acidic residues" evidence="3">
    <location>
        <begin position="122"/>
        <end position="133"/>
    </location>
</feature>
<feature type="splice variant" id="VSP_052286" description="In isoform 2." evidence="6">
    <original>ARKVLENRSLADEERMDALENQLKEARFLAEEADKKYD</original>
    <variation>IRKALENRTNMEDDRVAILEAQLSQAKLIAEESDKKYE</variation>
    <location>
        <begin position="126"/>
        <end position="163"/>
    </location>
</feature>
<feature type="splice variant" id="VSP_052287" description="In isoform 2." evidence="6">
    <original>NQREEEYKNQIKTLTTR</original>
    <variation>TKREETYETHLKLLDAQ</variation>
    <location>
        <begin position="215"/>
        <end position="231"/>
    </location>
</feature>
<feature type="splice variant" id="VSP_052288" description="In isoform 3." evidence="6">
    <original>YKNQIKT</original>
    <variation>SKIQIKN</variation>
    <location>
        <begin position="221"/>
        <end position="227"/>
    </location>
</feature>
<feature type="splice variant" id="VSP_052289" description="In isoform 3." evidence="6">
    <original>RSVQKLQKEVDRLEDELVAEKEKYKDIGDDLDTAFVELILKE</original>
    <variation>KTVKKLQKEVDRLEDELGINKDRYKSLADEMDSTFAELAGY</variation>
    <location>
        <begin position="244"/>
        <end position="285"/>
    </location>
</feature>
<feature type="splice variant" id="VSP_052290" description="In isoform 2." evidence="6">
    <original>ELVAEKEKYKDIGDDLDTAFVELILKE</original>
    <variation>DLVAEREKSKLLQEEMEATLHDIQNM</variation>
    <location>
        <begin position="259"/>
        <end position="285"/>
    </location>
</feature>
<feature type="sequence conflict" description="In Ref. 2; AA sequence." evidence="7" ref="2">
    <original>M</original>
    <variation>L</variation>
    <location>
        <position position="24"/>
    </location>
</feature>
<feature type="sequence conflict" description="In Ref. 2; AA sequence." evidence="7" ref="2">
    <original>E</original>
    <variation>Q</variation>
    <location>
        <position position="42"/>
    </location>
</feature>
<feature type="sequence conflict" description="In Ref. 2; AA sequence." evidence="7" ref="2">
    <original>I</original>
    <variation>V</variation>
    <location>
        <position position="53"/>
    </location>
</feature>
<comment type="function">
    <text evidence="7">Tropomyosin, in association with the troponin complex, plays a central role in the calcium dependent regulation of muscle contraction.</text>
</comment>
<comment type="subunit">
    <text evidence="1">Homodimer.</text>
</comment>
<comment type="alternative products">
    <event type="alternative splicing"/>
    <isoform>
        <id>Q1HPQ0-1</id>
        <name evidence="5">1</name>
        <sequence type="displayed"/>
    </isoform>
    <isoform>
        <id>Q1HPQ0-2</id>
        <name evidence="5">2</name>
        <sequence type="described" ref="VSP_052286 VSP_052287 VSP_052290"/>
    </isoform>
    <isoform>
        <id>Q1HPQ0-3</id>
        <name evidence="5">3</name>
        <name evidence="5">6</name>
        <sequence type="described" ref="VSP_052288 VSP_052289"/>
    </isoform>
</comment>
<comment type="domain">
    <text evidence="7">The molecule is in a coiled coil structure that is formed by 2 polypeptide chains. The sequence exhibits a prominent seven-residues periodicity.</text>
</comment>
<comment type="similarity">
    <text evidence="2">Belongs to the tropomyosin family.</text>
</comment>
<reference evidence="8" key="1">
    <citation type="submission" date="2006-03" db="EMBL/GenBank/DDBJ databases">
        <title>Blast silkworm EST database for functional genes.</title>
        <authorList>
            <person name="Niu B.L."/>
            <person name="Meng Z.Q."/>
            <person name="Weng H.B."/>
            <person name="Shen W.F."/>
            <person name="He L.H."/>
            <person name="Zheng K.F."/>
            <person name="Ye S.T."/>
            <person name="Lin T.B."/>
            <person name="Chen J.E."/>
        </authorList>
    </citation>
    <scope>NUCLEOTIDE SEQUENCE [MRNA] (ISOFORMS 1; 2 AND 3)</scope>
</reference>
<reference evidence="7" key="2">
    <citation type="journal article" date="2001" name="Yi Chuan Xue Bao">
        <title>Protein database for several tissues derived from five instar of silkworm.</title>
        <authorList>
            <person name="Zhong B.-X."/>
        </authorList>
    </citation>
    <scope>PROTEIN SEQUENCE OF 21-40 AND 36-55</scope>
    <source>
        <strain evidence="4">Xinhang X Keming</strain>
        <tissue evidence="4">Body wall</tissue>
        <tissue evidence="4">Fat body</tissue>
    </source>
</reference>
<protein>
    <recommendedName>
        <fullName>Tropomyosin-2</fullName>
    </recommendedName>
</protein>
<accession>Q1HPQ0</accession>
<accession>P82201</accession>
<accession>P82203</accession>
<accession>Q1HPP9</accession>
<accession>Q1HPU1</accession>